<sequence>MINHENNDLFDLNEALKVENLTLNDYEEICKRLKRKPNRTELGMFGVMWSEHCCYRNSKPLLSKFPTKGKNVLVGPGENAGVIDVGNNQKLVFKIESHNHPSAIEPFQGAATGVGGILRDIFTMGARPIAVLNSLRFGNLDKSSNVDLLRGVVSGIAHYGNCVGVPTVGGEIDFDDSYSGNPLVNVMALGLLETEEIVCSGAKNVGSPVLYVGNTTGRDGVGGASFASSELTTTSLDDRPAVQVGDPFIEKSLIEACLDAFKTGDVIAAQDMGAAGLTCSSAEMAANGNLGISIDLDLVPSREDDMSSYQYLLSESQERMLFVVKEEKISDLIEKFNKWGLYASVIGEVIGTNEVIISHKGNIVAQIPTSALSDDTPVNFHNVINNPPDDLLNKWEWKENDLPEINEQKIFSLKENKKFSFSEIILKLLSNPSIASKRWIYKQYDSQVQANTVFTPGKSDAAVVRLREQNKKSKNKVFSGVAASVDCNSRWVALDPFRGSIAAVAESARNVSCVGAEPVAITNNLNFSSPENEIGYWQLSSSCNGIAEACKALETPVTGGNVSLYNESKNKDNLITPINPTPVIGMVGKIDNVEKAISSEWKNIEDQIWLIGSYKSDTTTAASSYLEYFHGEITGRPPKIDLSDEKFCQSFLRNAILNSLVVSSHDISDGGLAIALAESCILSARGATIELEKDLNRVDNLLFAEGGSRIIFSISKMKQNEWFNYLKQNQINFPSSVYVKKIGYVSSDTLKIKINEKNICNIRVEELTEKFNNSISDYF</sequence>
<comment type="function">
    <text evidence="1">Part of the phosphoribosylformylglycinamidine synthase complex involved in the purines biosynthetic pathway. Catalyzes the ATP-dependent conversion of formylglycinamide ribonucleotide (FGAR) and glutamine to yield formylglycinamidine ribonucleotide (FGAM) and glutamate. The FGAM synthase complex is composed of three subunits. PurQ produces an ammonia molecule by converting glutamine to glutamate. PurL transfers the ammonia molecule to FGAR to form FGAM in an ATP-dependent manner. PurS interacts with PurQ and PurL and is thought to assist in the transfer of the ammonia molecule from PurQ to PurL.</text>
</comment>
<comment type="catalytic activity">
    <reaction evidence="1">
        <text>N(2)-formyl-N(1)-(5-phospho-beta-D-ribosyl)glycinamide + L-glutamine + ATP + H2O = 2-formamido-N(1)-(5-O-phospho-beta-D-ribosyl)acetamidine + L-glutamate + ADP + phosphate + H(+)</text>
        <dbReference type="Rhea" id="RHEA:17129"/>
        <dbReference type="ChEBI" id="CHEBI:15377"/>
        <dbReference type="ChEBI" id="CHEBI:15378"/>
        <dbReference type="ChEBI" id="CHEBI:29985"/>
        <dbReference type="ChEBI" id="CHEBI:30616"/>
        <dbReference type="ChEBI" id="CHEBI:43474"/>
        <dbReference type="ChEBI" id="CHEBI:58359"/>
        <dbReference type="ChEBI" id="CHEBI:147286"/>
        <dbReference type="ChEBI" id="CHEBI:147287"/>
        <dbReference type="ChEBI" id="CHEBI:456216"/>
        <dbReference type="EC" id="6.3.5.3"/>
    </reaction>
</comment>
<comment type="pathway">
    <text evidence="1">Purine metabolism; IMP biosynthesis via de novo pathway; 5-amino-1-(5-phospho-D-ribosyl)imidazole from N(2)-formyl-N(1)-(5-phospho-D-ribosyl)glycinamide: step 1/2.</text>
</comment>
<comment type="subunit">
    <text evidence="1">Monomer. Part of the FGAM synthase complex composed of 1 PurL, 1 PurQ and 2 PurS subunits.</text>
</comment>
<comment type="subcellular location">
    <subcellularLocation>
        <location evidence="1">Cytoplasm</location>
    </subcellularLocation>
</comment>
<comment type="similarity">
    <text evidence="1">Belongs to the FGAMS family.</text>
</comment>
<feature type="chain" id="PRO_1000050336" description="Phosphoribosylformylglycinamidine synthase subunit PurL">
    <location>
        <begin position="1"/>
        <end position="779"/>
    </location>
</feature>
<feature type="active site" evidence="1">
    <location>
        <position position="52"/>
    </location>
</feature>
<feature type="active site" description="Proton acceptor" evidence="1">
    <location>
        <position position="98"/>
    </location>
</feature>
<feature type="binding site" evidence="1">
    <location>
        <position position="55"/>
    </location>
    <ligand>
        <name>ATP</name>
        <dbReference type="ChEBI" id="CHEBI:30616"/>
    </ligand>
</feature>
<feature type="binding site" evidence="1">
    <location>
        <position position="94"/>
    </location>
    <ligand>
        <name>ATP</name>
        <dbReference type="ChEBI" id="CHEBI:30616"/>
    </ligand>
</feature>
<feature type="binding site" evidence="1">
    <location>
        <position position="96"/>
    </location>
    <ligand>
        <name>Mg(2+)</name>
        <dbReference type="ChEBI" id="CHEBI:18420"/>
        <label>1</label>
    </ligand>
</feature>
<feature type="binding site" evidence="1">
    <location>
        <begin position="97"/>
        <end position="100"/>
    </location>
    <ligand>
        <name>substrate</name>
    </ligand>
</feature>
<feature type="binding site" evidence="1">
    <location>
        <position position="119"/>
    </location>
    <ligand>
        <name>substrate</name>
    </ligand>
</feature>
<feature type="binding site" evidence="1">
    <location>
        <position position="120"/>
    </location>
    <ligand>
        <name>Mg(2+)</name>
        <dbReference type="ChEBI" id="CHEBI:18420"/>
        <label>2</label>
    </ligand>
</feature>
<feature type="binding site" evidence="1">
    <location>
        <position position="243"/>
    </location>
    <ligand>
        <name>substrate</name>
    </ligand>
</feature>
<feature type="binding site" evidence="1">
    <location>
        <position position="271"/>
    </location>
    <ligand>
        <name>Mg(2+)</name>
        <dbReference type="ChEBI" id="CHEBI:18420"/>
        <label>2</label>
    </ligand>
</feature>
<feature type="binding site" evidence="1">
    <location>
        <begin position="315"/>
        <end position="317"/>
    </location>
    <ligand>
        <name>substrate</name>
    </ligand>
</feature>
<feature type="binding site" evidence="1">
    <location>
        <position position="523"/>
    </location>
    <ligand>
        <name>ATP</name>
        <dbReference type="ChEBI" id="CHEBI:30616"/>
    </ligand>
</feature>
<feature type="binding site" evidence="1">
    <location>
        <position position="560"/>
    </location>
    <ligand>
        <name>ATP</name>
        <dbReference type="ChEBI" id="CHEBI:30616"/>
    </ligand>
</feature>
<feature type="binding site" evidence="1">
    <location>
        <position position="561"/>
    </location>
    <ligand>
        <name>Mg(2+)</name>
        <dbReference type="ChEBI" id="CHEBI:18420"/>
        <label>1</label>
    </ligand>
</feature>
<feature type="binding site" evidence="1">
    <location>
        <position position="563"/>
    </location>
    <ligand>
        <name>substrate</name>
    </ligand>
</feature>
<accession>A2BNC9</accession>
<reference key="1">
    <citation type="journal article" date="2007" name="PLoS Genet.">
        <title>Patterns and implications of gene gain and loss in the evolution of Prochlorococcus.</title>
        <authorList>
            <person name="Kettler G.C."/>
            <person name="Martiny A.C."/>
            <person name="Huang K."/>
            <person name="Zucker J."/>
            <person name="Coleman M.L."/>
            <person name="Rodrigue S."/>
            <person name="Chen F."/>
            <person name="Lapidus A."/>
            <person name="Ferriera S."/>
            <person name="Johnson J."/>
            <person name="Steglich C."/>
            <person name="Church G.M."/>
            <person name="Richardson P."/>
            <person name="Chisholm S.W."/>
        </authorList>
    </citation>
    <scope>NUCLEOTIDE SEQUENCE [LARGE SCALE GENOMIC DNA]</scope>
    <source>
        <strain>AS9601</strain>
    </source>
</reference>
<name>PURL_PROMS</name>
<keyword id="KW-0067">ATP-binding</keyword>
<keyword id="KW-0963">Cytoplasm</keyword>
<keyword id="KW-0436">Ligase</keyword>
<keyword id="KW-0460">Magnesium</keyword>
<keyword id="KW-0479">Metal-binding</keyword>
<keyword id="KW-0547">Nucleotide-binding</keyword>
<keyword id="KW-0658">Purine biosynthesis</keyword>
<proteinExistence type="inferred from homology"/>
<protein>
    <recommendedName>
        <fullName evidence="1">Phosphoribosylformylglycinamidine synthase subunit PurL</fullName>
        <shortName evidence="1">FGAM synthase</shortName>
        <ecNumber evidence="1">6.3.5.3</ecNumber>
    </recommendedName>
    <alternativeName>
        <fullName evidence="1">Formylglycinamide ribonucleotide amidotransferase subunit II</fullName>
        <shortName evidence="1">FGAR amidotransferase II</shortName>
        <shortName evidence="1">FGAR-AT II</shortName>
    </alternativeName>
    <alternativeName>
        <fullName evidence="1">Glutamine amidotransferase PurL</fullName>
    </alternativeName>
    <alternativeName>
        <fullName evidence="1">Phosphoribosylformylglycinamidine synthase subunit II</fullName>
    </alternativeName>
</protein>
<evidence type="ECO:0000255" key="1">
    <source>
        <dbReference type="HAMAP-Rule" id="MF_00420"/>
    </source>
</evidence>
<gene>
    <name evidence="1" type="primary">purL</name>
    <name type="ordered locus">A9601_00021</name>
</gene>
<organism>
    <name type="scientific">Prochlorococcus marinus (strain AS9601)</name>
    <dbReference type="NCBI Taxonomy" id="146891"/>
    <lineage>
        <taxon>Bacteria</taxon>
        <taxon>Bacillati</taxon>
        <taxon>Cyanobacteriota</taxon>
        <taxon>Cyanophyceae</taxon>
        <taxon>Synechococcales</taxon>
        <taxon>Prochlorococcaceae</taxon>
        <taxon>Prochlorococcus</taxon>
    </lineage>
</organism>
<dbReference type="EC" id="6.3.5.3" evidence="1"/>
<dbReference type="EMBL" id="CP000551">
    <property type="protein sequence ID" value="ABM69290.1"/>
    <property type="molecule type" value="Genomic_DNA"/>
</dbReference>
<dbReference type="RefSeq" id="WP_011817480.1">
    <property type="nucleotide sequence ID" value="NC_008816.1"/>
</dbReference>
<dbReference type="SMR" id="A2BNC9"/>
<dbReference type="STRING" id="146891.A9601_00021"/>
<dbReference type="KEGG" id="pmb:A9601_00021"/>
<dbReference type="eggNOG" id="COG0046">
    <property type="taxonomic scope" value="Bacteria"/>
</dbReference>
<dbReference type="HOGENOM" id="CLU_003100_0_1_3"/>
<dbReference type="OrthoDB" id="9804441at2"/>
<dbReference type="UniPathway" id="UPA00074">
    <property type="reaction ID" value="UER00128"/>
</dbReference>
<dbReference type="Proteomes" id="UP000002590">
    <property type="component" value="Chromosome"/>
</dbReference>
<dbReference type="GO" id="GO:0005737">
    <property type="term" value="C:cytoplasm"/>
    <property type="evidence" value="ECO:0007669"/>
    <property type="project" value="UniProtKB-SubCell"/>
</dbReference>
<dbReference type="GO" id="GO:0005524">
    <property type="term" value="F:ATP binding"/>
    <property type="evidence" value="ECO:0007669"/>
    <property type="project" value="UniProtKB-UniRule"/>
</dbReference>
<dbReference type="GO" id="GO:0000287">
    <property type="term" value="F:magnesium ion binding"/>
    <property type="evidence" value="ECO:0007669"/>
    <property type="project" value="UniProtKB-UniRule"/>
</dbReference>
<dbReference type="GO" id="GO:0004642">
    <property type="term" value="F:phosphoribosylformylglycinamidine synthase activity"/>
    <property type="evidence" value="ECO:0007669"/>
    <property type="project" value="UniProtKB-UniRule"/>
</dbReference>
<dbReference type="GO" id="GO:0006189">
    <property type="term" value="P:'de novo' IMP biosynthetic process"/>
    <property type="evidence" value="ECO:0007669"/>
    <property type="project" value="UniProtKB-UniRule"/>
</dbReference>
<dbReference type="CDD" id="cd02203">
    <property type="entry name" value="PurL_repeat1"/>
    <property type="match status" value="1"/>
</dbReference>
<dbReference type="CDD" id="cd02204">
    <property type="entry name" value="PurL_repeat2"/>
    <property type="match status" value="1"/>
</dbReference>
<dbReference type="FunFam" id="3.30.1330.10:FF:000004">
    <property type="entry name" value="Phosphoribosylformylglycinamidine synthase subunit PurL"/>
    <property type="match status" value="1"/>
</dbReference>
<dbReference type="Gene3D" id="3.90.650.10">
    <property type="entry name" value="PurM-like C-terminal domain"/>
    <property type="match status" value="2"/>
</dbReference>
<dbReference type="Gene3D" id="3.30.1330.10">
    <property type="entry name" value="PurM-like, N-terminal domain"/>
    <property type="match status" value="2"/>
</dbReference>
<dbReference type="HAMAP" id="MF_00420">
    <property type="entry name" value="PurL_2"/>
    <property type="match status" value="1"/>
</dbReference>
<dbReference type="InterPro" id="IPR010074">
    <property type="entry name" value="PRibForGlyAmidine_synth_PurL"/>
</dbReference>
<dbReference type="InterPro" id="IPR041609">
    <property type="entry name" value="PurL_linker"/>
</dbReference>
<dbReference type="InterPro" id="IPR010918">
    <property type="entry name" value="PurM-like_C_dom"/>
</dbReference>
<dbReference type="InterPro" id="IPR036676">
    <property type="entry name" value="PurM-like_C_sf"/>
</dbReference>
<dbReference type="InterPro" id="IPR016188">
    <property type="entry name" value="PurM-like_N"/>
</dbReference>
<dbReference type="InterPro" id="IPR036921">
    <property type="entry name" value="PurM-like_N_sf"/>
</dbReference>
<dbReference type="NCBIfam" id="TIGR01736">
    <property type="entry name" value="FGAM_synth_II"/>
    <property type="match status" value="1"/>
</dbReference>
<dbReference type="NCBIfam" id="NF002290">
    <property type="entry name" value="PRK01213.1"/>
    <property type="match status" value="1"/>
</dbReference>
<dbReference type="PANTHER" id="PTHR43555">
    <property type="entry name" value="PHOSPHORIBOSYLFORMYLGLYCINAMIDINE SYNTHASE SUBUNIT PURL"/>
    <property type="match status" value="1"/>
</dbReference>
<dbReference type="PANTHER" id="PTHR43555:SF1">
    <property type="entry name" value="PHOSPHORIBOSYLFORMYLGLYCINAMIDINE SYNTHASE SUBUNIT PURL"/>
    <property type="match status" value="1"/>
</dbReference>
<dbReference type="Pfam" id="PF00586">
    <property type="entry name" value="AIRS"/>
    <property type="match status" value="2"/>
</dbReference>
<dbReference type="Pfam" id="PF02769">
    <property type="entry name" value="AIRS_C"/>
    <property type="match status" value="2"/>
</dbReference>
<dbReference type="Pfam" id="PF18072">
    <property type="entry name" value="FGAR-AT_linker"/>
    <property type="match status" value="1"/>
</dbReference>
<dbReference type="PIRSF" id="PIRSF001587">
    <property type="entry name" value="FGAM_synthase_II"/>
    <property type="match status" value="1"/>
</dbReference>
<dbReference type="SUPFAM" id="SSF56042">
    <property type="entry name" value="PurM C-terminal domain-like"/>
    <property type="match status" value="2"/>
</dbReference>
<dbReference type="SUPFAM" id="SSF55326">
    <property type="entry name" value="PurM N-terminal domain-like"/>
    <property type="match status" value="2"/>
</dbReference>